<gene>
    <name evidence="1" type="primary">ruvA</name>
    <name type="ordered locus">FP2122</name>
</gene>
<reference key="1">
    <citation type="journal article" date="2007" name="Nat. Biotechnol.">
        <title>Complete genome sequence of the fish pathogen Flavobacterium psychrophilum.</title>
        <authorList>
            <person name="Duchaud E."/>
            <person name="Boussaha M."/>
            <person name="Loux V."/>
            <person name="Bernardet J.-F."/>
            <person name="Michel C."/>
            <person name="Kerouault B."/>
            <person name="Mondot S."/>
            <person name="Nicolas P."/>
            <person name="Bossy R."/>
            <person name="Caron C."/>
            <person name="Bessieres P."/>
            <person name="Gibrat J.-F."/>
            <person name="Claverol S."/>
            <person name="Dumetz F."/>
            <person name="Le Henaff M."/>
            <person name="Benmansour A."/>
        </authorList>
    </citation>
    <scope>NUCLEOTIDE SEQUENCE [LARGE SCALE GENOMIC DNA]</scope>
    <source>
        <strain>ATCC 49511 / DSM 21280 / CIP 103535 / JIP02/86</strain>
    </source>
</reference>
<keyword id="KW-0963">Cytoplasm</keyword>
<keyword id="KW-0227">DNA damage</keyword>
<keyword id="KW-0233">DNA recombination</keyword>
<keyword id="KW-0234">DNA repair</keyword>
<keyword id="KW-0238">DNA-binding</keyword>
<keyword id="KW-1185">Reference proteome</keyword>
<proteinExistence type="inferred from homology"/>
<feature type="chain" id="PRO_1000002448" description="Holliday junction branch migration complex subunit RuvA">
    <location>
        <begin position="1"/>
        <end position="193"/>
    </location>
</feature>
<feature type="region of interest" description="Domain I" evidence="1">
    <location>
        <begin position="1"/>
        <end position="63"/>
    </location>
</feature>
<feature type="region of interest" description="Domain II" evidence="1">
    <location>
        <begin position="64"/>
        <end position="142"/>
    </location>
</feature>
<feature type="region of interest" description="Flexible linker" evidence="1">
    <location>
        <begin position="143"/>
        <end position="145"/>
    </location>
</feature>
<feature type="region of interest" description="Domain III" evidence="1">
    <location>
        <begin position="145"/>
        <end position="193"/>
    </location>
</feature>
<evidence type="ECO:0000255" key="1">
    <source>
        <dbReference type="HAMAP-Rule" id="MF_00031"/>
    </source>
</evidence>
<protein>
    <recommendedName>
        <fullName evidence="1">Holliday junction branch migration complex subunit RuvA</fullName>
    </recommendedName>
</protein>
<accession>A6H1G0</accession>
<sequence length="193" mass="21046">MIAHIQGKLVEKSPTEVVIDCNGVGYHVNISLHTYGLLPTTDFVKLFTHLIIKEDSHSLYGFAEKSEKEIFKLLISVSGIGANIARTMLSSIEPKQIINAIGSGDVGTIQSIKGIGVKTAQRTIIDLKEKVLKLYDLDQVSISQSNTNKDEALSALEVLGFIRKSAEKVVEKIVATMPDATVETIIKQALKNL</sequence>
<organism>
    <name type="scientific">Flavobacterium psychrophilum (strain ATCC 49511 / DSM 21280 / CIP 103535 / JIP02/86)</name>
    <dbReference type="NCBI Taxonomy" id="402612"/>
    <lineage>
        <taxon>Bacteria</taxon>
        <taxon>Pseudomonadati</taxon>
        <taxon>Bacteroidota</taxon>
        <taxon>Flavobacteriia</taxon>
        <taxon>Flavobacteriales</taxon>
        <taxon>Flavobacteriaceae</taxon>
        <taxon>Flavobacterium</taxon>
    </lineage>
</organism>
<name>RUVA_FLAPJ</name>
<comment type="function">
    <text evidence="1">The RuvA-RuvB-RuvC complex processes Holliday junction (HJ) DNA during genetic recombination and DNA repair, while the RuvA-RuvB complex plays an important role in the rescue of blocked DNA replication forks via replication fork reversal (RFR). RuvA specifically binds to HJ cruciform DNA, conferring on it an open structure. The RuvB hexamer acts as an ATP-dependent pump, pulling dsDNA into and through the RuvAB complex. HJ branch migration allows RuvC to scan DNA until it finds its consensus sequence, where it cleaves and resolves the cruciform DNA.</text>
</comment>
<comment type="subunit">
    <text evidence="1">Homotetramer. Forms an RuvA(8)-RuvB(12)-Holliday junction (HJ) complex. HJ DNA is sandwiched between 2 RuvA tetramers; dsDNA enters through RuvA and exits via RuvB. An RuvB hexamer assembles on each DNA strand where it exits the tetramer. Each RuvB hexamer is contacted by two RuvA subunits (via domain III) on 2 adjacent RuvB subunits; this complex drives branch migration. In the full resolvosome a probable DNA-RuvA(4)-RuvB(12)-RuvC(2) complex forms which resolves the HJ.</text>
</comment>
<comment type="subcellular location">
    <subcellularLocation>
        <location evidence="1">Cytoplasm</location>
    </subcellularLocation>
</comment>
<comment type="domain">
    <text evidence="1">Has three domains with a flexible linker between the domains II and III and assumes an 'L' shape. Domain III is highly mobile and contacts RuvB.</text>
</comment>
<comment type="similarity">
    <text evidence="1">Belongs to the RuvA family.</text>
</comment>
<dbReference type="EMBL" id="AM398681">
    <property type="protein sequence ID" value="CAL44184.1"/>
    <property type="molecule type" value="Genomic_DNA"/>
</dbReference>
<dbReference type="RefSeq" id="WP_011964221.1">
    <property type="nucleotide sequence ID" value="NC_009613.3"/>
</dbReference>
<dbReference type="RefSeq" id="YP_001296986.1">
    <property type="nucleotide sequence ID" value="NC_009613.3"/>
</dbReference>
<dbReference type="SMR" id="A6H1G0"/>
<dbReference type="STRING" id="402612.FP2122"/>
<dbReference type="EnsemblBacteria" id="CAL44184">
    <property type="protein sequence ID" value="CAL44184"/>
    <property type="gene ID" value="FP2122"/>
</dbReference>
<dbReference type="GeneID" id="66551693"/>
<dbReference type="KEGG" id="fps:FP2122"/>
<dbReference type="PATRIC" id="fig|402612.5.peg.2150"/>
<dbReference type="eggNOG" id="COG0632">
    <property type="taxonomic scope" value="Bacteria"/>
</dbReference>
<dbReference type="HOGENOM" id="CLU_087936_3_0_10"/>
<dbReference type="OrthoDB" id="5293449at2"/>
<dbReference type="Proteomes" id="UP000006394">
    <property type="component" value="Chromosome"/>
</dbReference>
<dbReference type="GO" id="GO:0005737">
    <property type="term" value="C:cytoplasm"/>
    <property type="evidence" value="ECO:0007669"/>
    <property type="project" value="UniProtKB-SubCell"/>
</dbReference>
<dbReference type="GO" id="GO:0009379">
    <property type="term" value="C:Holliday junction helicase complex"/>
    <property type="evidence" value="ECO:0007669"/>
    <property type="project" value="InterPro"/>
</dbReference>
<dbReference type="GO" id="GO:0048476">
    <property type="term" value="C:Holliday junction resolvase complex"/>
    <property type="evidence" value="ECO:0007669"/>
    <property type="project" value="UniProtKB-UniRule"/>
</dbReference>
<dbReference type="GO" id="GO:0005524">
    <property type="term" value="F:ATP binding"/>
    <property type="evidence" value="ECO:0007669"/>
    <property type="project" value="InterPro"/>
</dbReference>
<dbReference type="GO" id="GO:0000400">
    <property type="term" value="F:four-way junction DNA binding"/>
    <property type="evidence" value="ECO:0007669"/>
    <property type="project" value="UniProtKB-UniRule"/>
</dbReference>
<dbReference type="GO" id="GO:0009378">
    <property type="term" value="F:four-way junction helicase activity"/>
    <property type="evidence" value="ECO:0007669"/>
    <property type="project" value="InterPro"/>
</dbReference>
<dbReference type="GO" id="GO:0006310">
    <property type="term" value="P:DNA recombination"/>
    <property type="evidence" value="ECO:0007669"/>
    <property type="project" value="UniProtKB-UniRule"/>
</dbReference>
<dbReference type="GO" id="GO:0006281">
    <property type="term" value="P:DNA repair"/>
    <property type="evidence" value="ECO:0007669"/>
    <property type="project" value="UniProtKB-UniRule"/>
</dbReference>
<dbReference type="CDD" id="cd14332">
    <property type="entry name" value="UBA_RuvA_C"/>
    <property type="match status" value="1"/>
</dbReference>
<dbReference type="Gene3D" id="1.10.150.20">
    <property type="entry name" value="5' to 3' exonuclease, C-terminal subdomain"/>
    <property type="match status" value="1"/>
</dbReference>
<dbReference type="Gene3D" id="1.10.8.10">
    <property type="entry name" value="DNA helicase RuvA subunit, C-terminal domain"/>
    <property type="match status" value="1"/>
</dbReference>
<dbReference type="Gene3D" id="2.40.50.140">
    <property type="entry name" value="Nucleic acid-binding proteins"/>
    <property type="match status" value="1"/>
</dbReference>
<dbReference type="HAMAP" id="MF_00031">
    <property type="entry name" value="DNA_HJ_migration_RuvA"/>
    <property type="match status" value="1"/>
</dbReference>
<dbReference type="InterPro" id="IPR013849">
    <property type="entry name" value="DNA_helicase_Holl-junc_RuvA_I"/>
</dbReference>
<dbReference type="InterPro" id="IPR012340">
    <property type="entry name" value="NA-bd_OB-fold"/>
</dbReference>
<dbReference type="InterPro" id="IPR000085">
    <property type="entry name" value="RuvA"/>
</dbReference>
<dbReference type="InterPro" id="IPR010994">
    <property type="entry name" value="RuvA_2-like"/>
</dbReference>
<dbReference type="InterPro" id="IPR011114">
    <property type="entry name" value="RuvA_C"/>
</dbReference>
<dbReference type="InterPro" id="IPR036267">
    <property type="entry name" value="RuvA_C_sf"/>
</dbReference>
<dbReference type="NCBIfam" id="TIGR00084">
    <property type="entry name" value="ruvA"/>
    <property type="match status" value="1"/>
</dbReference>
<dbReference type="Pfam" id="PF14520">
    <property type="entry name" value="HHH_5"/>
    <property type="match status" value="1"/>
</dbReference>
<dbReference type="Pfam" id="PF07499">
    <property type="entry name" value="RuvA_C"/>
    <property type="match status" value="1"/>
</dbReference>
<dbReference type="Pfam" id="PF01330">
    <property type="entry name" value="RuvA_N"/>
    <property type="match status" value="1"/>
</dbReference>
<dbReference type="SUPFAM" id="SSF46929">
    <property type="entry name" value="DNA helicase RuvA subunit, C-terminal domain"/>
    <property type="match status" value="1"/>
</dbReference>
<dbReference type="SUPFAM" id="SSF50249">
    <property type="entry name" value="Nucleic acid-binding proteins"/>
    <property type="match status" value="1"/>
</dbReference>
<dbReference type="SUPFAM" id="SSF47781">
    <property type="entry name" value="RuvA domain 2-like"/>
    <property type="match status" value="1"/>
</dbReference>